<reference key="1">
    <citation type="journal article" date="2003" name="Proc. Natl. Acad. Sci. U.S.A.">
        <title>The complete genome sequence of the Arabidopsis and tomato pathogen Pseudomonas syringae pv. tomato DC3000.</title>
        <authorList>
            <person name="Buell C.R."/>
            <person name="Joardar V."/>
            <person name="Lindeberg M."/>
            <person name="Selengut J."/>
            <person name="Paulsen I.T."/>
            <person name="Gwinn M.L."/>
            <person name="Dodson R.J."/>
            <person name="DeBoy R.T."/>
            <person name="Durkin A.S."/>
            <person name="Kolonay J.F."/>
            <person name="Madupu R."/>
            <person name="Daugherty S.C."/>
            <person name="Brinkac L.M."/>
            <person name="Beanan M.J."/>
            <person name="Haft D.H."/>
            <person name="Nelson W.C."/>
            <person name="Davidsen T.M."/>
            <person name="Zafar N."/>
            <person name="Zhou L."/>
            <person name="Liu J."/>
            <person name="Yuan Q."/>
            <person name="Khouri H.M."/>
            <person name="Fedorova N.B."/>
            <person name="Tran B."/>
            <person name="Russell D."/>
            <person name="Berry K.J."/>
            <person name="Utterback T.R."/>
            <person name="Van Aken S.E."/>
            <person name="Feldblyum T.V."/>
            <person name="D'Ascenzo M."/>
            <person name="Deng W.-L."/>
            <person name="Ramos A.R."/>
            <person name="Alfano J.R."/>
            <person name="Cartinhour S."/>
            <person name="Chatterjee A.K."/>
            <person name="Delaney T.P."/>
            <person name="Lazarowitz S.G."/>
            <person name="Martin G.B."/>
            <person name="Schneider D.J."/>
            <person name="Tang X."/>
            <person name="Bender C.L."/>
            <person name="White O."/>
            <person name="Fraser C.M."/>
            <person name="Collmer A."/>
        </authorList>
    </citation>
    <scope>NUCLEOTIDE SEQUENCE [LARGE SCALE GENOMIC DNA]</scope>
    <source>
        <strain>ATCC BAA-871 / DC3000</strain>
    </source>
</reference>
<feature type="chain" id="PRO_0000334380" description="Na(+)/H(+) antiporter NhaA 2">
    <location>
        <begin position="1"/>
        <end position="391"/>
    </location>
</feature>
<feature type="transmembrane region" description="Helical" evidence="1">
    <location>
        <begin position="25"/>
        <end position="45"/>
    </location>
</feature>
<feature type="transmembrane region" description="Helical" evidence="1">
    <location>
        <begin position="56"/>
        <end position="76"/>
    </location>
</feature>
<feature type="transmembrane region" description="Helical" evidence="1">
    <location>
        <begin position="98"/>
        <end position="118"/>
    </location>
</feature>
<feature type="transmembrane region" description="Helical" evidence="1">
    <location>
        <begin position="128"/>
        <end position="148"/>
    </location>
</feature>
<feature type="transmembrane region" description="Helical" evidence="1">
    <location>
        <begin position="157"/>
        <end position="177"/>
    </location>
</feature>
<feature type="transmembrane region" description="Helical" evidence="1">
    <location>
        <begin position="180"/>
        <end position="200"/>
    </location>
</feature>
<feature type="transmembrane region" description="Helical" evidence="1">
    <location>
        <begin position="208"/>
        <end position="228"/>
    </location>
</feature>
<feature type="transmembrane region" description="Helical" evidence="1">
    <location>
        <begin position="264"/>
        <end position="284"/>
    </location>
</feature>
<feature type="transmembrane region" description="Helical" evidence="1">
    <location>
        <begin position="297"/>
        <end position="317"/>
    </location>
</feature>
<feature type="transmembrane region" description="Helical" evidence="1">
    <location>
        <begin position="335"/>
        <end position="355"/>
    </location>
</feature>
<feature type="transmembrane region" description="Helical" evidence="1">
    <location>
        <begin position="364"/>
        <end position="384"/>
    </location>
</feature>
<accession>Q87UW8</accession>
<gene>
    <name evidence="1" type="primary">nhaA2</name>
    <name type="ordered locus">PSPTO_5174</name>
</gene>
<evidence type="ECO:0000255" key="1">
    <source>
        <dbReference type="HAMAP-Rule" id="MF_01844"/>
    </source>
</evidence>
<proteinExistence type="inferred from homology"/>
<organism>
    <name type="scientific">Pseudomonas syringae pv. tomato (strain ATCC BAA-871 / DC3000)</name>
    <dbReference type="NCBI Taxonomy" id="223283"/>
    <lineage>
        <taxon>Bacteria</taxon>
        <taxon>Pseudomonadati</taxon>
        <taxon>Pseudomonadota</taxon>
        <taxon>Gammaproteobacteria</taxon>
        <taxon>Pseudomonadales</taxon>
        <taxon>Pseudomonadaceae</taxon>
        <taxon>Pseudomonas</taxon>
    </lineage>
</organism>
<dbReference type="EMBL" id="AE016853">
    <property type="protein sequence ID" value="AAO58600.1"/>
    <property type="molecule type" value="Genomic_DNA"/>
</dbReference>
<dbReference type="RefSeq" id="NP_794905.1">
    <property type="nucleotide sequence ID" value="NC_004578.1"/>
</dbReference>
<dbReference type="SMR" id="Q87UW8"/>
<dbReference type="STRING" id="223283.PSPTO_5174"/>
<dbReference type="GeneID" id="1186859"/>
<dbReference type="KEGG" id="pst:PSPTO_5174"/>
<dbReference type="PATRIC" id="fig|223283.9.peg.5295"/>
<dbReference type="eggNOG" id="COG3004">
    <property type="taxonomic scope" value="Bacteria"/>
</dbReference>
<dbReference type="HOGENOM" id="CLU_015803_1_0_6"/>
<dbReference type="OrthoDB" id="9808135at2"/>
<dbReference type="PhylomeDB" id="Q87UW8"/>
<dbReference type="Proteomes" id="UP000002515">
    <property type="component" value="Chromosome"/>
</dbReference>
<dbReference type="GO" id="GO:0005886">
    <property type="term" value="C:plasma membrane"/>
    <property type="evidence" value="ECO:0007669"/>
    <property type="project" value="UniProtKB-SubCell"/>
</dbReference>
<dbReference type="GO" id="GO:0015385">
    <property type="term" value="F:sodium:proton antiporter activity"/>
    <property type="evidence" value="ECO:0007669"/>
    <property type="project" value="TreeGrafter"/>
</dbReference>
<dbReference type="GO" id="GO:0006885">
    <property type="term" value="P:regulation of pH"/>
    <property type="evidence" value="ECO:0007669"/>
    <property type="project" value="InterPro"/>
</dbReference>
<dbReference type="Gene3D" id="1.20.1530.10">
    <property type="entry name" value="Na+/H+ antiporter like domain"/>
    <property type="match status" value="1"/>
</dbReference>
<dbReference type="HAMAP" id="MF_01844">
    <property type="entry name" value="NhaA"/>
    <property type="match status" value="1"/>
</dbReference>
<dbReference type="InterPro" id="IPR023171">
    <property type="entry name" value="Na/H_antiporter_dom_sf"/>
</dbReference>
<dbReference type="InterPro" id="IPR004670">
    <property type="entry name" value="NhaA"/>
</dbReference>
<dbReference type="NCBIfam" id="TIGR00773">
    <property type="entry name" value="NhaA"/>
    <property type="match status" value="1"/>
</dbReference>
<dbReference type="NCBIfam" id="NF007111">
    <property type="entry name" value="PRK09560.1"/>
    <property type="match status" value="1"/>
</dbReference>
<dbReference type="NCBIfam" id="NF007112">
    <property type="entry name" value="PRK09561.1"/>
    <property type="match status" value="1"/>
</dbReference>
<dbReference type="PANTHER" id="PTHR30341:SF0">
    <property type="entry name" value="NA(+)_H(+) ANTIPORTER NHAA"/>
    <property type="match status" value="1"/>
</dbReference>
<dbReference type="PANTHER" id="PTHR30341">
    <property type="entry name" value="SODIUM ION/PROTON ANTIPORTER NHAA-RELATED"/>
    <property type="match status" value="1"/>
</dbReference>
<dbReference type="Pfam" id="PF06965">
    <property type="entry name" value="Na_H_antiport_1"/>
    <property type="match status" value="1"/>
</dbReference>
<sequence>MTQVPNRETPRGVAILTRFLASESAGGIVLMAAALAALIVANSPLSAGYFSTLHSVWLGLSVELWINDGLMAIFFLMVGLEIKREVLAGGLATWGQRALPGFAALGGMLVPALIYIAINWGNPQTLSGWAIPAATDIAFALGVLSLLGNRVPTSLKVFLAALAILDDLGAVTIIAFFYSSGLNLPMLAAAFVTLAVLVALNRLNIRRLLPYLLLGALLWFFVLQSGVHATLAGVALALCIPMGKPEEEARSPLLLLEEKMHYWVAFAVVPIFGFANAGVSLSGITLANLIDPVPLGVALGLFVGKQIGVFLAAVLAIRAGLAVLPEGSNWVQLYGVAILCGIGFTMSLFIGNLAFPGSQHLIDEVKVGVLIGSGLAAVAGIVLLRSRFSRH</sequence>
<comment type="function">
    <text evidence="1">Na(+)/H(+) antiporter that extrudes sodium in exchange for external protons.</text>
</comment>
<comment type="catalytic activity">
    <reaction evidence="1">
        <text>Na(+)(in) + 2 H(+)(out) = Na(+)(out) + 2 H(+)(in)</text>
        <dbReference type="Rhea" id="RHEA:29251"/>
        <dbReference type="ChEBI" id="CHEBI:15378"/>
        <dbReference type="ChEBI" id="CHEBI:29101"/>
    </reaction>
    <physiologicalReaction direction="left-to-right" evidence="1">
        <dbReference type="Rhea" id="RHEA:29252"/>
    </physiologicalReaction>
</comment>
<comment type="subcellular location">
    <subcellularLocation>
        <location evidence="1">Cell inner membrane</location>
        <topology evidence="1">Multi-pass membrane protein</topology>
    </subcellularLocation>
</comment>
<comment type="similarity">
    <text evidence="1">Belongs to the NhaA Na(+)/H(+) (TC 2.A.33) antiporter family.</text>
</comment>
<keyword id="KW-0050">Antiport</keyword>
<keyword id="KW-0997">Cell inner membrane</keyword>
<keyword id="KW-1003">Cell membrane</keyword>
<keyword id="KW-0406">Ion transport</keyword>
<keyword id="KW-0472">Membrane</keyword>
<keyword id="KW-1185">Reference proteome</keyword>
<keyword id="KW-0915">Sodium</keyword>
<keyword id="KW-0739">Sodium transport</keyword>
<keyword id="KW-0812">Transmembrane</keyword>
<keyword id="KW-1133">Transmembrane helix</keyword>
<keyword id="KW-0813">Transport</keyword>
<name>NHAA2_PSESM</name>
<protein>
    <recommendedName>
        <fullName evidence="1">Na(+)/H(+) antiporter NhaA 2</fullName>
    </recommendedName>
    <alternativeName>
        <fullName evidence="1">Sodium/proton antiporter NhaA 2</fullName>
    </alternativeName>
</protein>